<name>DAPEL_LISIN</name>
<accession>Q92D10</accession>
<sequence length="371" mass="41546">MLNEFIAIRRDLHQIPETGYKELKTQAYLLDYISKLPNEFLEIKKWRTGILVLVKGTNPGKTIGYRTDIDALPITEETGLPFESKHAGNMHACGHDLHMSIALGVLTHFASKPAKDNLLFVFQPAEEGPGGAKPIMESAEFSEWRPDTIYGLHIAPEYKVGQIAIKPGLLFANTSELFISFKGKGGHAAYPHLANDMVVAASAFVGQMQTIISRNIDPMDSAVITIGRIHGGEIQNVIAETAFLDGTIRTLSPETMEIVWTRLKQLAKGWEEAYQCEVEFHPGSDYYQVDNDPVETEEFIHFLEEQYPESYVPARSAMTGEDFGYFLSEIKGFMFWLGVDSEYSLHHAKLSPKEEAIPFAIDVLVNFLESK</sequence>
<comment type="function">
    <text evidence="1">Catalyzes the conversion of N-acetyl-diaminopimelate to diaminopimelate and acetate.</text>
</comment>
<comment type="catalytic activity">
    <reaction evidence="1">
        <text>N-acetyl-(2S,6S)-2,6-diaminopimelate + H2O = (2S,6S)-2,6-diaminopimelate + acetate</text>
        <dbReference type="Rhea" id="RHEA:20405"/>
        <dbReference type="ChEBI" id="CHEBI:15377"/>
        <dbReference type="ChEBI" id="CHEBI:30089"/>
        <dbReference type="ChEBI" id="CHEBI:57609"/>
        <dbReference type="ChEBI" id="CHEBI:58767"/>
        <dbReference type="EC" id="3.5.1.47"/>
    </reaction>
</comment>
<comment type="pathway">
    <text evidence="1">Amino-acid biosynthesis; L-lysine biosynthesis via DAP pathway; LL-2,6-diaminopimelate from (S)-tetrahydrodipicolinate (acetylase route): step 3/3.</text>
</comment>
<comment type="similarity">
    <text evidence="1">Belongs to the peptidase M20A family. N-acetyldiaminopimelate deacetylase subfamily.</text>
</comment>
<keyword id="KW-0028">Amino-acid biosynthesis</keyword>
<keyword id="KW-0220">Diaminopimelate biosynthesis</keyword>
<keyword id="KW-0378">Hydrolase</keyword>
<keyword id="KW-0457">Lysine biosynthesis</keyword>
<evidence type="ECO:0000255" key="1">
    <source>
        <dbReference type="HAMAP-Rule" id="MF_01692"/>
    </source>
</evidence>
<proteinExistence type="inferred from homology"/>
<protein>
    <recommendedName>
        <fullName evidence="1">N-acetyldiaminopimelate deacetylase</fullName>
        <ecNumber evidence="1">3.5.1.47</ecNumber>
    </recommendedName>
</protein>
<organism>
    <name type="scientific">Listeria innocua serovar 6a (strain ATCC BAA-680 / CLIP 11262)</name>
    <dbReference type="NCBI Taxonomy" id="272626"/>
    <lineage>
        <taxon>Bacteria</taxon>
        <taxon>Bacillati</taxon>
        <taxon>Bacillota</taxon>
        <taxon>Bacilli</taxon>
        <taxon>Bacillales</taxon>
        <taxon>Listeriaceae</taxon>
        <taxon>Listeria</taxon>
    </lineage>
</organism>
<dbReference type="EC" id="3.5.1.47" evidence="1"/>
<dbReference type="EMBL" id="AL596167">
    <property type="protein sequence ID" value="CAC96242.1"/>
    <property type="molecule type" value="Genomic_DNA"/>
</dbReference>
<dbReference type="PIR" id="AB1559">
    <property type="entry name" value="AB1559"/>
</dbReference>
<dbReference type="RefSeq" id="WP_003761548.1">
    <property type="nucleotide sequence ID" value="NC_003212.1"/>
</dbReference>
<dbReference type="SMR" id="Q92D10"/>
<dbReference type="STRING" id="272626.gene:17565341"/>
<dbReference type="MEROPS" id="M20.A27"/>
<dbReference type="KEGG" id="lin:lin1011"/>
<dbReference type="eggNOG" id="COG1473">
    <property type="taxonomic scope" value="Bacteria"/>
</dbReference>
<dbReference type="HOGENOM" id="CLU_023257_0_1_9"/>
<dbReference type="OrthoDB" id="9776731at2"/>
<dbReference type="UniPathway" id="UPA00034">
    <property type="reaction ID" value="UER00024"/>
</dbReference>
<dbReference type="Proteomes" id="UP000002513">
    <property type="component" value="Chromosome"/>
</dbReference>
<dbReference type="GO" id="GO:0050118">
    <property type="term" value="F:N-acetyldiaminopimelate deacetylase activity"/>
    <property type="evidence" value="ECO:0007669"/>
    <property type="project" value="UniProtKB-UniRule"/>
</dbReference>
<dbReference type="GO" id="GO:0019877">
    <property type="term" value="P:diaminopimelate biosynthetic process"/>
    <property type="evidence" value="ECO:0007669"/>
    <property type="project" value="UniProtKB-UniRule"/>
</dbReference>
<dbReference type="GO" id="GO:0009089">
    <property type="term" value="P:lysine biosynthetic process via diaminopimelate"/>
    <property type="evidence" value="ECO:0007669"/>
    <property type="project" value="UniProtKB-UniRule"/>
</dbReference>
<dbReference type="CDD" id="cd05670">
    <property type="entry name" value="M20_Acy1_YkuR-like"/>
    <property type="match status" value="1"/>
</dbReference>
<dbReference type="FunFam" id="3.30.70.360:FF:000001">
    <property type="entry name" value="N-acetyldiaminopimelate deacetylase"/>
    <property type="match status" value="1"/>
</dbReference>
<dbReference type="Gene3D" id="3.30.70.360">
    <property type="match status" value="1"/>
</dbReference>
<dbReference type="Gene3D" id="3.40.630.10">
    <property type="entry name" value="Zn peptidases"/>
    <property type="match status" value="1"/>
</dbReference>
<dbReference type="HAMAP" id="MF_01692">
    <property type="entry name" value="DapEL"/>
    <property type="match status" value="1"/>
</dbReference>
<dbReference type="InterPro" id="IPR023905">
    <property type="entry name" value="AcetylDAP_deacetylase"/>
</dbReference>
<dbReference type="InterPro" id="IPR017439">
    <property type="entry name" value="Amidohydrolase"/>
</dbReference>
<dbReference type="InterPro" id="IPR036264">
    <property type="entry name" value="Bact_exopeptidase_dim_dom"/>
</dbReference>
<dbReference type="InterPro" id="IPR002933">
    <property type="entry name" value="Peptidase_M20"/>
</dbReference>
<dbReference type="InterPro" id="IPR011650">
    <property type="entry name" value="Peptidase_M20_dimer"/>
</dbReference>
<dbReference type="NCBIfam" id="TIGR01891">
    <property type="entry name" value="amidohydrolases"/>
    <property type="match status" value="1"/>
</dbReference>
<dbReference type="PANTHER" id="PTHR11014:SF98">
    <property type="entry name" value="N-ACETYLDIAMINOPIMELATE DEACETYLASE"/>
    <property type="match status" value="1"/>
</dbReference>
<dbReference type="PANTHER" id="PTHR11014">
    <property type="entry name" value="PEPTIDASE M20 FAMILY MEMBER"/>
    <property type="match status" value="1"/>
</dbReference>
<dbReference type="Pfam" id="PF07687">
    <property type="entry name" value="M20_dimer"/>
    <property type="match status" value="1"/>
</dbReference>
<dbReference type="Pfam" id="PF01546">
    <property type="entry name" value="Peptidase_M20"/>
    <property type="match status" value="1"/>
</dbReference>
<dbReference type="PIRSF" id="PIRSF005962">
    <property type="entry name" value="Pept_M20D_amidohydro"/>
    <property type="match status" value="1"/>
</dbReference>
<dbReference type="SUPFAM" id="SSF55031">
    <property type="entry name" value="Bacterial exopeptidase dimerisation domain"/>
    <property type="match status" value="1"/>
</dbReference>
<dbReference type="SUPFAM" id="SSF53187">
    <property type="entry name" value="Zn-dependent exopeptidases"/>
    <property type="match status" value="1"/>
</dbReference>
<feature type="chain" id="PRO_0000376771" description="N-acetyldiaminopimelate deacetylase">
    <location>
        <begin position="1"/>
        <end position="371"/>
    </location>
</feature>
<feature type="active site" evidence="1">
    <location>
        <position position="68"/>
    </location>
</feature>
<feature type="active site" description="Proton acceptor" evidence="1">
    <location>
        <position position="127"/>
    </location>
</feature>
<gene>
    <name type="ordered locus">lin1011</name>
</gene>
<reference key="1">
    <citation type="journal article" date="2001" name="Science">
        <title>Comparative genomics of Listeria species.</title>
        <authorList>
            <person name="Glaser P."/>
            <person name="Frangeul L."/>
            <person name="Buchrieser C."/>
            <person name="Rusniok C."/>
            <person name="Amend A."/>
            <person name="Baquero F."/>
            <person name="Berche P."/>
            <person name="Bloecker H."/>
            <person name="Brandt P."/>
            <person name="Chakraborty T."/>
            <person name="Charbit A."/>
            <person name="Chetouani F."/>
            <person name="Couve E."/>
            <person name="de Daruvar A."/>
            <person name="Dehoux P."/>
            <person name="Domann E."/>
            <person name="Dominguez-Bernal G."/>
            <person name="Duchaud E."/>
            <person name="Durant L."/>
            <person name="Dussurget O."/>
            <person name="Entian K.-D."/>
            <person name="Fsihi H."/>
            <person name="Garcia-del Portillo F."/>
            <person name="Garrido P."/>
            <person name="Gautier L."/>
            <person name="Goebel W."/>
            <person name="Gomez-Lopez N."/>
            <person name="Hain T."/>
            <person name="Hauf J."/>
            <person name="Jackson D."/>
            <person name="Jones L.-M."/>
            <person name="Kaerst U."/>
            <person name="Kreft J."/>
            <person name="Kuhn M."/>
            <person name="Kunst F."/>
            <person name="Kurapkat G."/>
            <person name="Madueno E."/>
            <person name="Maitournam A."/>
            <person name="Mata Vicente J."/>
            <person name="Ng E."/>
            <person name="Nedjari H."/>
            <person name="Nordsiek G."/>
            <person name="Novella S."/>
            <person name="de Pablos B."/>
            <person name="Perez-Diaz J.-C."/>
            <person name="Purcell R."/>
            <person name="Remmel B."/>
            <person name="Rose M."/>
            <person name="Schlueter T."/>
            <person name="Simoes N."/>
            <person name="Tierrez A."/>
            <person name="Vazquez-Boland J.-A."/>
            <person name="Voss H."/>
            <person name="Wehland J."/>
            <person name="Cossart P."/>
        </authorList>
    </citation>
    <scope>NUCLEOTIDE SEQUENCE [LARGE SCALE GENOMIC DNA]</scope>
    <source>
        <strain>ATCC BAA-680 / CLIP 11262</strain>
    </source>
</reference>